<gene>
    <name type="primary">MARCKSL1</name>
    <name type="synonym">MLP</name>
    <name type="synonym">MRP</name>
</gene>
<comment type="function">
    <text evidence="1 6">Controls cell movement by regulating actin cytoskeleton homeostasis and filopodium and lamellipodium formation (By similarity). When unphosphorylated, induces cell migration (By similarity). When phosphorylated by MAPK8, induces actin bundles formation and stabilization, thereby reducing actin plasticity, hence restricting cell movement, including neuronal migration (By similarity). May be involved in coupling the protein kinase C and calmodulin signal transduction systems (Probable).</text>
</comment>
<comment type="subunit">
    <text evidence="1 4">Binds to filamentous actin (F-actin), but not to monomeric G-actin, independently of its phosphorylation status (By similarity). Interacts with calmodulin (PubMed:1516135).</text>
</comment>
<comment type="subcellular location">
    <subcellularLocation>
        <location evidence="1">Cytoplasm</location>
        <location evidence="1">Cytoskeleton</location>
    </subcellularLocation>
    <subcellularLocation>
        <location evidence="6">Cell membrane</location>
        <topology evidence="6">Lipid-anchor</topology>
    </subcellularLocation>
    <text evidence="1 2">Associates with the membrane via the insertion of the N-terminal N-myristoyl chain and the partial insertion of the effector domain. Association of the effector domain with membranes may be regulated by Ca(2+)/calmodulin. Colocalizes with F-actin at the leading edge of migrating cells.</text>
</comment>
<comment type="induction">
    <text evidence="4">Up-regulated in alveolar macrophages in response to bacterial lipopolysaccharide (LPS).</text>
</comment>
<comment type="PTM">
    <text evidence="1 4">Phosphorylated (PubMed:1516135). Phosphorylation at Ser-120 and Thr-182 is non-redundantly catalyzed by MAPK8 in vivo (By similarity). Phosphorylation at Thr-148 is preferentially catalyzed by MAPK8 in vivo, but this modification can also be catalyzed by other kinases in the absence of MAPK8 (By similarity). May be phosphorylated by protein kinase C, which disrupts the interaction with calmodulin (PubMed:1516135).</text>
</comment>
<comment type="similarity">
    <text evidence="5">Belongs to the MARCKS family.</text>
</comment>
<reference key="1">
    <citation type="journal article" date="1992" name="Cell">
        <title>MacMARCKS, a novel member of the MARCKS family of protein kinase C substrates.</title>
        <authorList>
            <person name="Li J."/>
            <person name="Aderem A."/>
        </authorList>
    </citation>
    <scope>NUCLEOTIDE SEQUENCE [MRNA]</scope>
    <scope>PARTIAL PROTEIN SEQUENCE</scope>
    <scope>FUNCTION</scope>
    <scope>INTERACTION WITH CALMODULIN</scope>
    <scope>SUBCELLULAR LOCATION</scope>
    <scope>INDUCTION</scope>
    <scope>PHOSPHORYLATION</scope>
    <scope>MYRISTOYLATION AT GLY-2</scope>
    <source>
        <tissue>Macrophage</tissue>
    </source>
</reference>
<organism>
    <name type="scientific">Oryctolagus cuniculus</name>
    <name type="common">Rabbit</name>
    <dbReference type="NCBI Taxonomy" id="9986"/>
    <lineage>
        <taxon>Eukaryota</taxon>
        <taxon>Metazoa</taxon>
        <taxon>Chordata</taxon>
        <taxon>Craniata</taxon>
        <taxon>Vertebrata</taxon>
        <taxon>Euteleostomi</taxon>
        <taxon>Mammalia</taxon>
        <taxon>Eutheria</taxon>
        <taxon>Euarchontoglires</taxon>
        <taxon>Glires</taxon>
        <taxon>Lagomorpha</taxon>
        <taxon>Leporidae</taxon>
        <taxon>Oryctolagus</taxon>
    </lineage>
</organism>
<sequence length="199" mass="19766">MGSQSSKAPRGDVTAEEAAGASPAKANGQENGHVKSNGDLTPKGEGESPPVNGTDEAAGATGDAIEPAPPSQGAEAKGDAPPKETPKKKKKFSFKKPFKLSGLSFKRNRKEGGGDSSASSPTEEEQEQGEIGACSEEGTAPEGKAAATPESQEPQAKGAEAGAACKGGDTEEEAGPPAEPSTPSGPESGPTPAGAEQNE</sequence>
<keyword id="KW-0009">Actin-binding</keyword>
<keyword id="KW-0112">Calmodulin-binding</keyword>
<keyword id="KW-1003">Cell membrane</keyword>
<keyword id="KW-0963">Cytoplasm</keyword>
<keyword id="KW-0206">Cytoskeleton</keyword>
<keyword id="KW-0903">Direct protein sequencing</keyword>
<keyword id="KW-0449">Lipoprotein</keyword>
<keyword id="KW-0472">Membrane</keyword>
<keyword id="KW-0519">Myristate</keyword>
<keyword id="KW-0597">Phosphoprotein</keyword>
<keyword id="KW-1185">Reference proteome</keyword>
<accession>P35566</accession>
<feature type="initiator methionine" description="Removed" evidence="6">
    <location>
        <position position="1"/>
    </location>
</feature>
<feature type="chain" id="PRO_0000157154" description="MARCKS-related protein">
    <location>
        <begin position="2"/>
        <end position="199"/>
    </location>
</feature>
<feature type="region of interest" description="Disordered" evidence="3">
    <location>
        <begin position="1"/>
        <end position="199"/>
    </location>
</feature>
<feature type="region of interest" description="Effector domain involved in lipid-binding and calmodulin-binding" evidence="1">
    <location>
        <begin position="87"/>
        <end position="110"/>
    </location>
</feature>
<feature type="compositionally biased region" description="Low complexity" evidence="3">
    <location>
        <begin position="16"/>
        <end position="26"/>
    </location>
</feature>
<feature type="compositionally biased region" description="Low complexity" evidence="3">
    <location>
        <begin position="53"/>
        <end position="64"/>
    </location>
</feature>
<feature type="compositionally biased region" description="Basic and acidic residues" evidence="3">
    <location>
        <begin position="76"/>
        <end position="85"/>
    </location>
</feature>
<feature type="compositionally biased region" description="Basic residues" evidence="3">
    <location>
        <begin position="86"/>
        <end position="98"/>
    </location>
</feature>
<feature type="compositionally biased region" description="Low complexity" evidence="3">
    <location>
        <begin position="156"/>
        <end position="167"/>
    </location>
</feature>
<feature type="compositionally biased region" description="Low complexity" evidence="3">
    <location>
        <begin position="181"/>
        <end position="199"/>
    </location>
</feature>
<feature type="modified residue" description="Phosphothreonine" evidence="2">
    <location>
        <position position="14"/>
    </location>
</feature>
<feature type="modified residue" description="Phosphoserine" evidence="2">
    <location>
        <position position="22"/>
    </location>
</feature>
<feature type="modified residue" description="Phosphoserine" evidence="2">
    <location>
        <position position="36"/>
    </location>
</feature>
<feature type="modified residue" description="Phosphoserine" evidence="1">
    <location>
        <position position="48"/>
    </location>
</feature>
<feature type="modified residue" description="Phosphoserine" evidence="2">
    <location>
        <position position="71"/>
    </location>
</feature>
<feature type="modified residue" description="Phosphothreonine" evidence="2">
    <location>
        <position position="85"/>
    </location>
</feature>
<feature type="modified residue" description="Phosphoserine; by PKC" evidence="2">
    <location>
        <position position="93"/>
    </location>
</feature>
<feature type="modified residue" description="Phosphoserine; by PKC" evidence="2">
    <location>
        <position position="101"/>
    </location>
</feature>
<feature type="modified residue" description="Phosphoserine; by PKC" evidence="2">
    <location>
        <position position="104"/>
    </location>
</feature>
<feature type="modified residue" description="Phosphoserine" evidence="1">
    <location>
        <position position="119"/>
    </location>
</feature>
<feature type="modified residue" description="Phosphoserine; by MAPK8" evidence="1">
    <location>
        <position position="120"/>
    </location>
</feature>
<feature type="modified residue" description="Phosphoserine" evidence="1">
    <location>
        <position position="135"/>
    </location>
</feature>
<feature type="modified residue" description="Phosphothreonine; by MAPK8" evidence="1">
    <location>
        <position position="148"/>
    </location>
</feature>
<feature type="modified residue" description="Phosphoserine" evidence="2">
    <location>
        <position position="151"/>
    </location>
</feature>
<feature type="modified residue" description="Phosphothreonine" evidence="1">
    <location>
        <position position="170"/>
    </location>
</feature>
<feature type="modified residue" description="Phosphothreonine; by MAPK8" evidence="1">
    <location>
        <position position="182"/>
    </location>
</feature>
<feature type="modified residue" description="Phosphothreonine" evidence="1">
    <location>
        <position position="191"/>
    </location>
</feature>
<feature type="lipid moiety-binding region" description="N-myristoyl glycine" evidence="4">
    <location>
        <position position="2"/>
    </location>
</feature>
<dbReference type="EMBL" id="S43921">
    <property type="protein sequence ID" value="AAB23156.1"/>
    <property type="molecule type" value="mRNA"/>
</dbReference>
<dbReference type="PIR" id="A43341">
    <property type="entry name" value="A43341"/>
</dbReference>
<dbReference type="RefSeq" id="NP_001075787.1">
    <property type="nucleotide sequence ID" value="NM_001082318.1"/>
</dbReference>
<dbReference type="FunCoup" id="P35566">
    <property type="interactions" value="122"/>
</dbReference>
<dbReference type="STRING" id="9986.ENSOCUP00000007731"/>
<dbReference type="iPTMnet" id="P35566"/>
<dbReference type="PaxDb" id="9986-ENSOCUP00000007731"/>
<dbReference type="GeneID" id="100009158"/>
<dbReference type="KEGG" id="ocu:100009158"/>
<dbReference type="CTD" id="65108"/>
<dbReference type="eggNOG" id="ENOG502RYXK">
    <property type="taxonomic scope" value="Eukaryota"/>
</dbReference>
<dbReference type="InParanoid" id="P35566"/>
<dbReference type="OrthoDB" id="9948538at2759"/>
<dbReference type="Proteomes" id="UP000001811">
    <property type="component" value="Unplaced"/>
</dbReference>
<dbReference type="GO" id="GO:0005737">
    <property type="term" value="C:cytoplasm"/>
    <property type="evidence" value="ECO:0007669"/>
    <property type="project" value="UniProtKB-KW"/>
</dbReference>
<dbReference type="GO" id="GO:0005856">
    <property type="term" value="C:cytoskeleton"/>
    <property type="evidence" value="ECO:0007669"/>
    <property type="project" value="UniProtKB-SubCell"/>
</dbReference>
<dbReference type="GO" id="GO:0005886">
    <property type="term" value="C:plasma membrane"/>
    <property type="evidence" value="ECO:0007669"/>
    <property type="project" value="UniProtKB-SubCell"/>
</dbReference>
<dbReference type="GO" id="GO:0051015">
    <property type="term" value="F:actin filament binding"/>
    <property type="evidence" value="ECO:0007669"/>
    <property type="project" value="TreeGrafter"/>
</dbReference>
<dbReference type="GO" id="GO:0005516">
    <property type="term" value="F:calmodulin binding"/>
    <property type="evidence" value="ECO:0007669"/>
    <property type="project" value="UniProtKB-KW"/>
</dbReference>
<dbReference type="GO" id="GO:0007015">
    <property type="term" value="P:actin filament organization"/>
    <property type="evidence" value="ECO:0007669"/>
    <property type="project" value="TreeGrafter"/>
</dbReference>
<dbReference type="GO" id="GO:0007417">
    <property type="term" value="P:central nervous system development"/>
    <property type="evidence" value="ECO:0007669"/>
    <property type="project" value="TreeGrafter"/>
</dbReference>
<dbReference type="InterPro" id="IPR002101">
    <property type="entry name" value="MARCKS"/>
</dbReference>
<dbReference type="PANTHER" id="PTHR14353:SF8">
    <property type="entry name" value="MARCKS-RELATED PROTEIN"/>
    <property type="match status" value="1"/>
</dbReference>
<dbReference type="PANTHER" id="PTHR14353">
    <property type="entry name" value="MYRISTOYLATED ALANINE-RICH C-KINASE SUBSTRATE MARCKS"/>
    <property type="match status" value="1"/>
</dbReference>
<dbReference type="Pfam" id="PF02063">
    <property type="entry name" value="MARCKS"/>
    <property type="match status" value="2"/>
</dbReference>
<dbReference type="PRINTS" id="PR00963">
    <property type="entry name" value="MARCKS"/>
</dbReference>
<dbReference type="PROSITE" id="PS00826">
    <property type="entry name" value="MARCKS_1"/>
    <property type="match status" value="1"/>
</dbReference>
<dbReference type="PROSITE" id="PS00827">
    <property type="entry name" value="MARCKS_2"/>
    <property type="match status" value="1"/>
</dbReference>
<proteinExistence type="evidence at protein level"/>
<evidence type="ECO:0000250" key="1">
    <source>
        <dbReference type="UniProtKB" id="P28667"/>
    </source>
</evidence>
<evidence type="ECO:0000250" key="2">
    <source>
        <dbReference type="UniProtKB" id="P49006"/>
    </source>
</evidence>
<evidence type="ECO:0000256" key="3">
    <source>
        <dbReference type="SAM" id="MobiDB-lite"/>
    </source>
</evidence>
<evidence type="ECO:0000269" key="4">
    <source>
    </source>
</evidence>
<evidence type="ECO:0000305" key="5"/>
<evidence type="ECO:0000305" key="6">
    <source>
    </source>
</evidence>
<name>MRP_RABIT</name>
<protein>
    <recommendedName>
        <fullName>MARCKS-related protein</fullName>
    </recommendedName>
    <alternativeName>
        <fullName>MARCKS-like protein 1</fullName>
    </alternativeName>
    <alternativeName>
        <fullName>Macrophage myristoylated alanine-rich C kinase substrate</fullName>
        <shortName>Mac-MARCKS</shortName>
        <shortName>MacMARCKS</shortName>
    </alternativeName>
</protein>